<keyword id="KW-0012">Acyltransferase</keyword>
<keyword id="KW-0963">Cytoplasm</keyword>
<keyword id="KW-0408">Iron</keyword>
<keyword id="KW-0479">Metal-binding</keyword>
<keyword id="KW-1185">Reference proteome</keyword>
<keyword id="KW-0808">Transferase</keyword>
<keyword id="KW-0819">tRNA processing</keyword>
<feature type="chain" id="PRO_0000303329" description="tRNA N6-adenosine threonylcarbamoyltransferase">
    <location>
        <begin position="1"/>
        <end position="341"/>
    </location>
</feature>
<feature type="binding site" evidence="1">
    <location>
        <position position="115"/>
    </location>
    <ligand>
        <name>Fe cation</name>
        <dbReference type="ChEBI" id="CHEBI:24875"/>
    </ligand>
</feature>
<feature type="binding site" evidence="1">
    <location>
        <position position="119"/>
    </location>
    <ligand>
        <name>Fe cation</name>
        <dbReference type="ChEBI" id="CHEBI:24875"/>
    </ligand>
</feature>
<feature type="binding site" evidence="1">
    <location>
        <begin position="138"/>
        <end position="142"/>
    </location>
    <ligand>
        <name>substrate</name>
    </ligand>
</feature>
<feature type="binding site" evidence="1">
    <location>
        <position position="171"/>
    </location>
    <ligand>
        <name>substrate</name>
    </ligand>
</feature>
<feature type="binding site" evidence="1">
    <location>
        <position position="184"/>
    </location>
    <ligand>
        <name>substrate</name>
    </ligand>
</feature>
<feature type="binding site" evidence="1">
    <location>
        <position position="188"/>
    </location>
    <ligand>
        <name>substrate</name>
    </ligand>
</feature>
<feature type="binding site" evidence="1">
    <location>
        <position position="279"/>
    </location>
    <ligand>
        <name>substrate</name>
    </ligand>
</feature>
<feature type="binding site" evidence="1">
    <location>
        <position position="307"/>
    </location>
    <ligand>
        <name>Fe cation</name>
        <dbReference type="ChEBI" id="CHEBI:24875"/>
    </ligand>
</feature>
<name>TSAD_CLONN</name>
<organism>
    <name type="scientific">Clostridium novyi (strain NT)</name>
    <dbReference type="NCBI Taxonomy" id="386415"/>
    <lineage>
        <taxon>Bacteria</taxon>
        <taxon>Bacillati</taxon>
        <taxon>Bacillota</taxon>
        <taxon>Clostridia</taxon>
        <taxon>Eubacteriales</taxon>
        <taxon>Clostridiaceae</taxon>
        <taxon>Clostridium</taxon>
    </lineage>
</organism>
<comment type="function">
    <text evidence="1">Required for the formation of a threonylcarbamoyl group on adenosine at position 37 (t(6)A37) in tRNAs that read codons beginning with adenine. Is involved in the transfer of the threonylcarbamoyl moiety of threonylcarbamoyl-AMP (TC-AMP) to the N6 group of A37, together with TsaE and TsaB. TsaD likely plays a direct catalytic role in this reaction.</text>
</comment>
<comment type="catalytic activity">
    <reaction evidence="1">
        <text>L-threonylcarbamoyladenylate + adenosine(37) in tRNA = N(6)-L-threonylcarbamoyladenosine(37) in tRNA + AMP + H(+)</text>
        <dbReference type="Rhea" id="RHEA:37059"/>
        <dbReference type="Rhea" id="RHEA-COMP:10162"/>
        <dbReference type="Rhea" id="RHEA-COMP:10163"/>
        <dbReference type="ChEBI" id="CHEBI:15378"/>
        <dbReference type="ChEBI" id="CHEBI:73682"/>
        <dbReference type="ChEBI" id="CHEBI:74411"/>
        <dbReference type="ChEBI" id="CHEBI:74418"/>
        <dbReference type="ChEBI" id="CHEBI:456215"/>
        <dbReference type="EC" id="2.3.1.234"/>
    </reaction>
</comment>
<comment type="cofactor">
    <cofactor evidence="1">
        <name>Fe(2+)</name>
        <dbReference type="ChEBI" id="CHEBI:29033"/>
    </cofactor>
    <text evidence="1">Binds 1 Fe(2+) ion per subunit.</text>
</comment>
<comment type="subcellular location">
    <subcellularLocation>
        <location evidence="1">Cytoplasm</location>
    </subcellularLocation>
</comment>
<comment type="similarity">
    <text evidence="1">Belongs to the KAE1 / TsaD family.</text>
</comment>
<reference key="1">
    <citation type="journal article" date="2006" name="Nat. Biotechnol.">
        <title>The genome and transcriptomes of the anti-tumor agent Clostridium novyi-NT.</title>
        <authorList>
            <person name="Bettegowda C."/>
            <person name="Huang X."/>
            <person name="Lin J."/>
            <person name="Cheong I."/>
            <person name="Kohli M."/>
            <person name="Szabo S.A."/>
            <person name="Zhang X."/>
            <person name="Diaz L.A. Jr."/>
            <person name="Velculescu V.E."/>
            <person name="Parmigiani G."/>
            <person name="Kinzler K.W."/>
            <person name="Vogelstein B."/>
            <person name="Zhou S."/>
        </authorList>
    </citation>
    <scope>NUCLEOTIDE SEQUENCE [LARGE SCALE GENOMIC DNA]</scope>
    <source>
        <strain>NT</strain>
    </source>
</reference>
<evidence type="ECO:0000255" key="1">
    <source>
        <dbReference type="HAMAP-Rule" id="MF_01445"/>
    </source>
</evidence>
<gene>
    <name evidence="1" type="primary">tsaD</name>
    <name type="synonym">gcp</name>
    <name type="ordered locus">NT01CX_0478</name>
</gene>
<protein>
    <recommendedName>
        <fullName evidence="1">tRNA N6-adenosine threonylcarbamoyltransferase</fullName>
        <ecNumber evidence="1">2.3.1.234</ecNumber>
    </recommendedName>
    <alternativeName>
        <fullName evidence="1">N6-L-threonylcarbamoyladenine synthase</fullName>
        <shortName evidence="1">t(6)A synthase</shortName>
    </alternativeName>
    <alternativeName>
        <fullName evidence="1">t(6)A37 threonylcarbamoyladenosine biosynthesis protein TsaD</fullName>
    </alternativeName>
    <alternativeName>
        <fullName evidence="1">tRNA threonylcarbamoyladenosine biosynthesis protein TsaD</fullName>
    </alternativeName>
</protein>
<accession>A0Q2U7</accession>
<proteinExistence type="inferred from homology"/>
<dbReference type="EC" id="2.3.1.234" evidence="1"/>
<dbReference type="EMBL" id="CP000382">
    <property type="protein sequence ID" value="ABK62475.1"/>
    <property type="molecule type" value="Genomic_DNA"/>
</dbReference>
<dbReference type="RefSeq" id="WP_011722931.1">
    <property type="nucleotide sequence ID" value="NC_008593.1"/>
</dbReference>
<dbReference type="SMR" id="A0Q2U7"/>
<dbReference type="STRING" id="386415.NT01CX_0478"/>
<dbReference type="KEGG" id="cno:NT01CX_0478"/>
<dbReference type="eggNOG" id="COG0533">
    <property type="taxonomic scope" value="Bacteria"/>
</dbReference>
<dbReference type="HOGENOM" id="CLU_023208_0_2_9"/>
<dbReference type="Proteomes" id="UP000008220">
    <property type="component" value="Chromosome"/>
</dbReference>
<dbReference type="GO" id="GO:0005737">
    <property type="term" value="C:cytoplasm"/>
    <property type="evidence" value="ECO:0007669"/>
    <property type="project" value="UniProtKB-SubCell"/>
</dbReference>
<dbReference type="GO" id="GO:0005506">
    <property type="term" value="F:iron ion binding"/>
    <property type="evidence" value="ECO:0007669"/>
    <property type="project" value="UniProtKB-UniRule"/>
</dbReference>
<dbReference type="GO" id="GO:0061711">
    <property type="term" value="F:N(6)-L-threonylcarbamoyladenine synthase activity"/>
    <property type="evidence" value="ECO:0007669"/>
    <property type="project" value="UniProtKB-EC"/>
</dbReference>
<dbReference type="GO" id="GO:0002949">
    <property type="term" value="P:tRNA threonylcarbamoyladenosine modification"/>
    <property type="evidence" value="ECO:0007669"/>
    <property type="project" value="UniProtKB-UniRule"/>
</dbReference>
<dbReference type="CDD" id="cd24133">
    <property type="entry name" value="ASKHA_NBD_TsaD_bac"/>
    <property type="match status" value="1"/>
</dbReference>
<dbReference type="FunFam" id="3.30.420.40:FF:000012">
    <property type="entry name" value="tRNA N6-adenosine threonylcarbamoyltransferase"/>
    <property type="match status" value="1"/>
</dbReference>
<dbReference type="FunFam" id="3.30.420.40:FF:000040">
    <property type="entry name" value="tRNA N6-adenosine threonylcarbamoyltransferase"/>
    <property type="match status" value="1"/>
</dbReference>
<dbReference type="Gene3D" id="3.30.420.40">
    <property type="match status" value="2"/>
</dbReference>
<dbReference type="HAMAP" id="MF_01445">
    <property type="entry name" value="TsaD"/>
    <property type="match status" value="1"/>
</dbReference>
<dbReference type="InterPro" id="IPR043129">
    <property type="entry name" value="ATPase_NBD"/>
</dbReference>
<dbReference type="InterPro" id="IPR000905">
    <property type="entry name" value="Gcp-like_dom"/>
</dbReference>
<dbReference type="InterPro" id="IPR017861">
    <property type="entry name" value="KAE1/TsaD"/>
</dbReference>
<dbReference type="InterPro" id="IPR017860">
    <property type="entry name" value="Peptidase_M22_CS"/>
</dbReference>
<dbReference type="InterPro" id="IPR022450">
    <property type="entry name" value="TsaD"/>
</dbReference>
<dbReference type="NCBIfam" id="TIGR00329">
    <property type="entry name" value="gcp_kae1"/>
    <property type="match status" value="1"/>
</dbReference>
<dbReference type="NCBIfam" id="TIGR03723">
    <property type="entry name" value="T6A_TsaD_YgjD"/>
    <property type="match status" value="1"/>
</dbReference>
<dbReference type="PANTHER" id="PTHR11735">
    <property type="entry name" value="TRNA N6-ADENOSINE THREONYLCARBAMOYLTRANSFERASE"/>
    <property type="match status" value="1"/>
</dbReference>
<dbReference type="PANTHER" id="PTHR11735:SF6">
    <property type="entry name" value="TRNA N6-ADENOSINE THREONYLCARBAMOYLTRANSFERASE, MITOCHONDRIAL"/>
    <property type="match status" value="1"/>
</dbReference>
<dbReference type="Pfam" id="PF00814">
    <property type="entry name" value="TsaD"/>
    <property type="match status" value="1"/>
</dbReference>
<dbReference type="PRINTS" id="PR00789">
    <property type="entry name" value="OSIALOPTASE"/>
</dbReference>
<dbReference type="SUPFAM" id="SSF53067">
    <property type="entry name" value="Actin-like ATPase domain"/>
    <property type="match status" value="2"/>
</dbReference>
<dbReference type="PROSITE" id="PS01016">
    <property type="entry name" value="GLYCOPROTEASE"/>
    <property type="match status" value="1"/>
</dbReference>
<sequence>MSKDIKILAIESSCDETAAAVVVNGRDVLSNVIASQIDIHTKFGGVVPEVASRKHIEAIGIVVKEALEEANVTFDDIDAIGVTYGPGLVGALLVGVQYAKSLAYALKKPLIGVNHIEGHISANFIQYKDLKPPFVCLVVSGGHTFIVHMKDYGEFDILGETRDDAAGEAFDKVARAIGLGYPGGPKIDKISNEGNENAIVFPKANFHDKDCLDFSFSGVKSAVLNYINKMNMKNEEINRADVAASFQKSVVDVLVDNVIKACKLRNVDKIAIAGGVASNTHLREAMINAGKKNKIDVLFPAPILCTDNAAMIGSAAYFEYLKGRVAPLELNAIPNLKLGER</sequence>